<keyword id="KW-0002">3D-structure</keyword>
<keyword id="KW-1003">Cell membrane</keyword>
<keyword id="KW-0903">Direct protein sequencing</keyword>
<keyword id="KW-0249">Electron transport</keyword>
<keyword id="KW-0349">Heme</keyword>
<keyword id="KW-0408">Iron</keyword>
<keyword id="KW-0472">Membrane</keyword>
<keyword id="KW-0479">Metal-binding</keyword>
<keyword id="KW-0812">Transmembrane</keyword>
<keyword id="KW-1133">Transmembrane helix</keyword>
<keyword id="KW-0813">Transport</keyword>
<comment type="function">
    <text>Mediates the electron transport between the cytochrome bc1 complex and cytochrome-c oxidase.</text>
</comment>
<comment type="subcellular location">
    <subcellularLocation>
        <location>Cell membrane</location>
        <topology>Single-pass membrane protein</topology>
    </subcellularLocation>
</comment>
<comment type="PTM">
    <text>Binds 1 heme c group covalently per subunit.</text>
</comment>
<organism>
    <name type="scientific">Paracoccus denitrificans</name>
    <dbReference type="NCBI Taxonomy" id="266"/>
    <lineage>
        <taxon>Bacteria</taxon>
        <taxon>Pseudomonadati</taxon>
        <taxon>Pseudomonadota</taxon>
        <taxon>Alphaproteobacteria</taxon>
        <taxon>Rhodobacterales</taxon>
        <taxon>Paracoccaceae</taxon>
        <taxon>Paracoccus</taxon>
    </lineage>
</organism>
<dbReference type="EMBL" id="X70367">
    <property type="protein sequence ID" value="CAA49830.1"/>
    <property type="molecule type" value="Genomic_DNA"/>
</dbReference>
<dbReference type="PIR" id="S65941">
    <property type="entry name" value="S31922"/>
</dbReference>
<dbReference type="PDB" id="1C7M">
    <property type="method" value="NMR"/>
    <property type="chains" value="A=78-176"/>
</dbReference>
<dbReference type="PDB" id="1I6D">
    <property type="method" value="NMR"/>
    <property type="chains" value="A=78-176"/>
</dbReference>
<dbReference type="PDB" id="1I6E">
    <property type="method" value="NMR"/>
    <property type="chains" value="A=78-176"/>
</dbReference>
<dbReference type="PDB" id="1QL3">
    <property type="method" value="X-ray"/>
    <property type="resolution" value="1.40 A"/>
    <property type="chains" value="A/B/C/D=78-176"/>
</dbReference>
<dbReference type="PDB" id="1QL4">
    <property type="method" value="X-ray"/>
    <property type="resolution" value="1.50 A"/>
    <property type="chains" value="A/B/C/D=78-176"/>
</dbReference>
<dbReference type="PDB" id="3M97">
    <property type="method" value="X-ray"/>
    <property type="resolution" value="1.33 A"/>
    <property type="chains" value="X=38-176"/>
</dbReference>
<dbReference type="PDBsum" id="1C7M"/>
<dbReference type="PDBsum" id="1I6D"/>
<dbReference type="PDBsum" id="1I6E"/>
<dbReference type="PDBsum" id="1QL3"/>
<dbReference type="PDBsum" id="1QL4"/>
<dbReference type="PDBsum" id="3M97"/>
<dbReference type="BMRB" id="P54820"/>
<dbReference type="SMR" id="P54820"/>
<dbReference type="DrugBank" id="DB03317">
    <property type="generic name" value="Ferroheme C"/>
</dbReference>
<dbReference type="EvolutionaryTrace" id="P54820"/>
<dbReference type="GO" id="GO:0005886">
    <property type="term" value="C:plasma membrane"/>
    <property type="evidence" value="ECO:0007669"/>
    <property type="project" value="UniProtKB-SubCell"/>
</dbReference>
<dbReference type="GO" id="GO:0009055">
    <property type="term" value="F:electron transfer activity"/>
    <property type="evidence" value="ECO:0007669"/>
    <property type="project" value="InterPro"/>
</dbReference>
<dbReference type="GO" id="GO:0020037">
    <property type="term" value="F:heme binding"/>
    <property type="evidence" value="ECO:0007669"/>
    <property type="project" value="InterPro"/>
</dbReference>
<dbReference type="GO" id="GO:0046872">
    <property type="term" value="F:metal ion binding"/>
    <property type="evidence" value="ECO:0007669"/>
    <property type="project" value="UniProtKB-KW"/>
</dbReference>
<dbReference type="FunFam" id="1.10.760.10:FF:000026">
    <property type="entry name" value="Cytochrome C, membrane-bound"/>
    <property type="match status" value="1"/>
</dbReference>
<dbReference type="Gene3D" id="1.10.760.10">
    <property type="entry name" value="Cytochrome c-like domain"/>
    <property type="match status" value="1"/>
</dbReference>
<dbReference type="InterPro" id="IPR009056">
    <property type="entry name" value="Cyt_c-like_dom"/>
</dbReference>
<dbReference type="InterPro" id="IPR036909">
    <property type="entry name" value="Cyt_c-like_dom_sf"/>
</dbReference>
<dbReference type="InterPro" id="IPR002327">
    <property type="entry name" value="Cyt_c_1A/1B"/>
</dbReference>
<dbReference type="PANTHER" id="PTHR11961">
    <property type="entry name" value="CYTOCHROME C"/>
    <property type="match status" value="1"/>
</dbReference>
<dbReference type="Pfam" id="PF00034">
    <property type="entry name" value="Cytochrom_C"/>
    <property type="match status" value="1"/>
</dbReference>
<dbReference type="PRINTS" id="PR00604">
    <property type="entry name" value="CYTCHRMECIAB"/>
</dbReference>
<dbReference type="SUPFAM" id="SSF46626">
    <property type="entry name" value="Cytochrome c"/>
    <property type="match status" value="1"/>
</dbReference>
<dbReference type="PROSITE" id="PS51007">
    <property type="entry name" value="CYTC"/>
    <property type="match status" value="1"/>
</dbReference>
<feature type="chain" id="PRO_0000108401" description="Cytochrome c-552">
    <location>
        <begin position="1"/>
        <end position="176"/>
    </location>
</feature>
<feature type="transmembrane region" description="Helical; Signal-anchor" evidence="1">
    <location>
        <begin position="12"/>
        <end position="32"/>
    </location>
</feature>
<feature type="binding site" description="covalent">
    <location>
        <position position="90"/>
    </location>
    <ligand>
        <name>heme c</name>
        <dbReference type="ChEBI" id="CHEBI:61717"/>
    </ligand>
</feature>
<feature type="binding site" description="covalent">
    <location>
        <position position="93"/>
    </location>
    <ligand>
        <name>heme c</name>
        <dbReference type="ChEBI" id="CHEBI:61717"/>
    </ligand>
</feature>
<feature type="binding site" description="axial binding residue" evidence="2">
    <location>
        <position position="94"/>
    </location>
    <ligand>
        <name>heme c</name>
        <dbReference type="ChEBI" id="CHEBI:61717"/>
    </ligand>
    <ligandPart>
        <name>Fe</name>
        <dbReference type="ChEBI" id="CHEBI:18248"/>
    </ligandPart>
</feature>
<feature type="binding site" description="axial binding residue" evidence="2">
    <location>
        <position position="126"/>
    </location>
    <ligand>
        <name>heme c</name>
        <dbReference type="ChEBI" id="CHEBI:61717"/>
    </ligand>
    <ligandPart>
        <name>Fe</name>
        <dbReference type="ChEBI" id="CHEBI:18248"/>
    </ligandPart>
</feature>
<feature type="binding site" description="axial binding residue" evidence="2">
    <location>
        <position position="154"/>
    </location>
    <ligand>
        <name>heme c</name>
        <dbReference type="ChEBI" id="CHEBI:61717"/>
    </ligand>
    <ligandPart>
        <name>Fe</name>
        <dbReference type="ChEBI" id="CHEBI:18248"/>
    </ligandPart>
</feature>
<feature type="helix" evidence="3">
    <location>
        <begin position="71"/>
        <end position="76"/>
    </location>
</feature>
<feature type="helix" evidence="3">
    <location>
        <begin position="80"/>
        <end position="86"/>
    </location>
</feature>
<feature type="helix" evidence="3">
    <location>
        <begin position="87"/>
        <end position="89"/>
    </location>
</feature>
<feature type="turn" evidence="3">
    <location>
        <begin position="90"/>
        <end position="93"/>
    </location>
</feature>
<feature type="strand" evidence="3">
    <location>
        <begin position="96"/>
        <end position="98"/>
    </location>
</feature>
<feature type="strand" evidence="3">
    <location>
        <begin position="101"/>
        <end position="103"/>
    </location>
</feature>
<feature type="helix" evidence="3">
    <location>
        <begin position="124"/>
        <end position="128"/>
    </location>
</feature>
<feature type="helix" evidence="3">
    <location>
        <begin position="135"/>
        <end position="143"/>
    </location>
</feature>
<feature type="helix" evidence="3">
    <location>
        <begin position="145"/>
        <end position="148"/>
    </location>
</feature>
<feature type="helix" evidence="3">
    <location>
        <begin position="162"/>
        <end position="173"/>
    </location>
</feature>
<proteinExistence type="evidence at protein level"/>
<reference key="1">
    <citation type="journal article" date="1995" name="Eur. J. Biochem.">
        <title>Purification of Paracoccus denitrificans cytochrome c552 and sequence analysis of the gene.</title>
        <authorList>
            <person name="Turba A."/>
            <person name="Jetzek M."/>
            <person name="Ludwig B."/>
        </authorList>
    </citation>
    <scope>NUCLEOTIDE SEQUENCE [GENOMIC DNA]</scope>
    <scope>PROTEIN SEQUENCE OF 66-76; 132-139 AND 164-175</scope>
    <source>
        <strain>Pd 1235</strain>
    </source>
</reference>
<name>CY552_PARDE</name>
<protein>
    <recommendedName>
        <fullName>Cytochrome c-552</fullName>
    </recommendedName>
    <alternativeName>
        <fullName>Cytochrome c552</fullName>
    </alternativeName>
</protein>
<accession>P54820</accession>
<evidence type="ECO:0000255" key="1"/>
<evidence type="ECO:0000255" key="2">
    <source>
        <dbReference type="PROSITE-ProRule" id="PRU00433"/>
    </source>
</evidence>
<evidence type="ECO:0007829" key="3">
    <source>
        <dbReference type="PDB" id="3M97"/>
    </source>
</evidence>
<gene>
    <name type="primary">cycM</name>
</gene>
<sequence>MFDTMTVTKAAGALIGSLLFLLLMSWAASGIFHVGTSGHGAEGEEHAQAYTYPVESAGGAEGEAVDEGPDFATVLASADPAAGEKVFGKCKACHKLDGNDGVGPHLNGVVGRTVAGVDGFNYSDPMKAHGGDWTPEALQEFLTNPKAVVKGTKMAFAGLPKIEDRANLIAYLEGQQ</sequence>